<protein>
    <recommendedName>
        <fullName evidence="1">Small ribosomal subunit protein bS21</fullName>
    </recommendedName>
    <alternativeName>
        <fullName evidence="2">30S ribosomal protein S21</fullName>
    </alternativeName>
</protein>
<keyword id="KW-0687">Ribonucleoprotein</keyword>
<keyword id="KW-0689">Ribosomal protein</keyword>
<dbReference type="EMBL" id="AP009510">
    <property type="protein sequence ID" value="BAG13724.1"/>
    <property type="molecule type" value="Genomic_DNA"/>
</dbReference>
<dbReference type="RefSeq" id="WP_015423251.1">
    <property type="nucleotide sequence ID" value="NC_020419.1"/>
</dbReference>
<dbReference type="SMR" id="B1GZP2"/>
<dbReference type="STRING" id="471821.TGRD_241"/>
<dbReference type="KEGG" id="eti:RSTT_215"/>
<dbReference type="KEGG" id="rsd:TGRD_241"/>
<dbReference type="HOGENOM" id="CLU_159258_1_2_0"/>
<dbReference type="OrthoDB" id="9799244at2"/>
<dbReference type="Proteomes" id="UP000001691">
    <property type="component" value="Chromosome"/>
</dbReference>
<dbReference type="GO" id="GO:1990904">
    <property type="term" value="C:ribonucleoprotein complex"/>
    <property type="evidence" value="ECO:0007669"/>
    <property type="project" value="UniProtKB-KW"/>
</dbReference>
<dbReference type="GO" id="GO:0005840">
    <property type="term" value="C:ribosome"/>
    <property type="evidence" value="ECO:0007669"/>
    <property type="project" value="UniProtKB-KW"/>
</dbReference>
<dbReference type="GO" id="GO:0003735">
    <property type="term" value="F:structural constituent of ribosome"/>
    <property type="evidence" value="ECO:0007669"/>
    <property type="project" value="InterPro"/>
</dbReference>
<dbReference type="GO" id="GO:0006412">
    <property type="term" value="P:translation"/>
    <property type="evidence" value="ECO:0007669"/>
    <property type="project" value="UniProtKB-UniRule"/>
</dbReference>
<dbReference type="Gene3D" id="1.20.5.1150">
    <property type="entry name" value="Ribosomal protein S8"/>
    <property type="match status" value="1"/>
</dbReference>
<dbReference type="HAMAP" id="MF_00358">
    <property type="entry name" value="Ribosomal_bS21"/>
    <property type="match status" value="1"/>
</dbReference>
<dbReference type="InterPro" id="IPR001911">
    <property type="entry name" value="Ribosomal_bS21"/>
</dbReference>
<dbReference type="InterPro" id="IPR018278">
    <property type="entry name" value="Ribosomal_bS21_CS"/>
</dbReference>
<dbReference type="InterPro" id="IPR038380">
    <property type="entry name" value="Ribosomal_bS21_sf"/>
</dbReference>
<dbReference type="NCBIfam" id="TIGR00030">
    <property type="entry name" value="S21p"/>
    <property type="match status" value="1"/>
</dbReference>
<dbReference type="PANTHER" id="PTHR21109">
    <property type="entry name" value="MITOCHONDRIAL 28S RIBOSOMAL PROTEIN S21"/>
    <property type="match status" value="1"/>
</dbReference>
<dbReference type="PANTHER" id="PTHR21109:SF22">
    <property type="entry name" value="SMALL RIBOSOMAL SUBUNIT PROTEIN BS21"/>
    <property type="match status" value="1"/>
</dbReference>
<dbReference type="Pfam" id="PF01165">
    <property type="entry name" value="Ribosomal_S21"/>
    <property type="match status" value="1"/>
</dbReference>
<dbReference type="PRINTS" id="PR00976">
    <property type="entry name" value="RIBOSOMALS21"/>
</dbReference>
<dbReference type="PROSITE" id="PS01181">
    <property type="entry name" value="RIBOSOMAL_S21"/>
    <property type="match status" value="1"/>
</dbReference>
<name>RS21_ENDTX</name>
<comment type="similarity">
    <text evidence="1">Belongs to the bacterial ribosomal protein bS21 family.</text>
</comment>
<organism>
    <name type="scientific">Endomicrobium trichonymphae</name>
    <dbReference type="NCBI Taxonomy" id="1408204"/>
    <lineage>
        <taxon>Bacteria</taxon>
        <taxon>Pseudomonadati</taxon>
        <taxon>Elusimicrobiota</taxon>
        <taxon>Endomicrobiia</taxon>
        <taxon>Endomicrobiales</taxon>
        <taxon>Endomicrobiaceae</taxon>
        <taxon>Candidatus Endomicrobiellum</taxon>
    </lineage>
</organism>
<proteinExistence type="inferred from homology"/>
<gene>
    <name evidence="1" type="primary">rpsU</name>
    <name type="ordered locus">TGRD_241</name>
</gene>
<sequence>MVSVKVREGESIEEAIRRFKRECERNGVMQEIKKREFYKTPSILKKEKLAETKRKIRRKMFKDSKWSK</sequence>
<feature type="chain" id="PRO_1000120676" description="Small ribosomal subunit protein bS21">
    <location>
        <begin position="1"/>
        <end position="68"/>
    </location>
</feature>
<accession>B1GZP2</accession>
<reference key="1">
    <citation type="journal article" date="2008" name="Proc. Natl. Acad. Sci. U.S.A.">
        <title>Complete genome of the uncultured termite group 1 bacteria in a single host protist cell.</title>
        <authorList>
            <person name="Hongoh Y."/>
            <person name="Sharma V.K."/>
            <person name="Prakash T."/>
            <person name="Noda S."/>
            <person name="Taylor T.D."/>
            <person name="Kudo T."/>
            <person name="Sakaki Y."/>
            <person name="Toyoda A."/>
            <person name="Hattori M."/>
            <person name="Ohkuma M."/>
        </authorList>
    </citation>
    <scope>NUCLEOTIDE SEQUENCE [LARGE SCALE GENOMIC DNA]</scope>
</reference>
<evidence type="ECO:0000255" key="1">
    <source>
        <dbReference type="HAMAP-Rule" id="MF_00358"/>
    </source>
</evidence>
<evidence type="ECO:0000305" key="2"/>